<proteinExistence type="evidence at protein level"/>
<accession>Q9CPT3</accession>
<sequence>MGLSRVRAVFFDLDNTLIDTAGASRRGMLEVIKLLQSKYHYKEEAEIICDKVQVKLSKECFHPYSTCITDVRTSHWEEAIQETKGGADNRKLAEECYFLWKSTRLQHMILADDVKAMLTELRKEVRLLLLTNGDRQTQREKIEACACQSYFDAIVIGGEQKEEKPAPSIFYHCCDLLGVQPGDCVMVGDTLETDIQGGLNAGLKATVWINKSGRVPLTSSPMPHYMVSSVLELPALLQSIDCKVSMSV</sequence>
<organism>
    <name type="scientific">Mus musculus</name>
    <name type="common">Mouse</name>
    <dbReference type="NCBI Taxonomy" id="10090"/>
    <lineage>
        <taxon>Eukaryota</taxon>
        <taxon>Metazoa</taxon>
        <taxon>Chordata</taxon>
        <taxon>Craniata</taxon>
        <taxon>Vertebrata</taxon>
        <taxon>Euteleostomi</taxon>
        <taxon>Mammalia</taxon>
        <taxon>Eutheria</taxon>
        <taxon>Euarchontoglires</taxon>
        <taxon>Glires</taxon>
        <taxon>Rodentia</taxon>
        <taxon>Myomorpha</taxon>
        <taxon>Muroidea</taxon>
        <taxon>Muridae</taxon>
        <taxon>Murinae</taxon>
        <taxon>Mus</taxon>
        <taxon>Mus</taxon>
    </lineage>
</organism>
<name>NANP_MOUSE</name>
<feature type="chain" id="PRO_0000083939" description="N-acylneuraminate-9-phosphatase">
    <location>
        <begin position="1"/>
        <end position="248"/>
    </location>
</feature>
<feature type="binding site" evidence="2">
    <location>
        <position position="12"/>
    </location>
    <ligand>
        <name>Mg(2+)</name>
        <dbReference type="ChEBI" id="CHEBI:18420"/>
    </ligand>
</feature>
<feature type="binding site" evidence="2">
    <location>
        <position position="13"/>
    </location>
    <ligand>
        <name>phosphate</name>
        <dbReference type="ChEBI" id="CHEBI:43474"/>
    </ligand>
</feature>
<feature type="binding site" evidence="2">
    <location>
        <position position="14"/>
    </location>
    <ligand>
        <name>Mg(2+)</name>
        <dbReference type="ChEBI" id="CHEBI:18420"/>
    </ligand>
</feature>
<feature type="binding site" evidence="2">
    <location>
        <position position="14"/>
    </location>
    <ligand>
        <name>phosphate</name>
        <dbReference type="ChEBI" id="CHEBI:43474"/>
    </ligand>
</feature>
<feature type="binding site" evidence="2">
    <location>
        <position position="131"/>
    </location>
    <ligand>
        <name>phosphate</name>
        <dbReference type="ChEBI" id="CHEBI:43474"/>
    </ligand>
</feature>
<feature type="binding site" evidence="2">
    <location>
        <position position="132"/>
    </location>
    <ligand>
        <name>phosphate</name>
        <dbReference type="ChEBI" id="CHEBI:43474"/>
    </ligand>
</feature>
<feature type="binding site" evidence="2">
    <location>
        <position position="164"/>
    </location>
    <ligand>
        <name>phosphate</name>
        <dbReference type="ChEBI" id="CHEBI:43474"/>
    </ligand>
</feature>
<feature type="binding site" evidence="2">
    <location>
        <position position="189"/>
    </location>
    <ligand>
        <name>Mg(2+)</name>
        <dbReference type="ChEBI" id="CHEBI:18420"/>
    </ligand>
</feature>
<feature type="strand" evidence="5">
    <location>
        <begin position="8"/>
        <end position="11"/>
    </location>
</feature>
<feature type="turn" evidence="5">
    <location>
        <begin position="15"/>
        <end position="17"/>
    </location>
</feature>
<feature type="helix" evidence="5">
    <location>
        <begin position="20"/>
        <end position="37"/>
    </location>
</feature>
<feature type="helix" evidence="5">
    <location>
        <begin position="44"/>
        <end position="57"/>
    </location>
</feature>
<feature type="helix" evidence="5">
    <location>
        <begin position="68"/>
        <end position="84"/>
    </location>
</feature>
<feature type="helix" evidence="5">
    <location>
        <begin position="90"/>
        <end position="106"/>
    </location>
</feature>
<feature type="helix" evidence="5">
    <location>
        <begin position="112"/>
        <end position="122"/>
    </location>
</feature>
<feature type="strand" evidence="5">
    <location>
        <begin position="125"/>
        <end position="131"/>
    </location>
</feature>
<feature type="helix" evidence="5">
    <location>
        <begin position="135"/>
        <end position="145"/>
    </location>
</feature>
<feature type="helix" evidence="5">
    <location>
        <begin position="148"/>
        <end position="150"/>
    </location>
</feature>
<feature type="strand" evidence="5">
    <location>
        <begin position="152"/>
        <end position="156"/>
    </location>
</feature>
<feature type="helix" evidence="5">
    <location>
        <begin position="157"/>
        <end position="159"/>
    </location>
</feature>
<feature type="strand" evidence="5">
    <location>
        <begin position="160"/>
        <end position="162"/>
    </location>
</feature>
<feature type="helix" evidence="5">
    <location>
        <begin position="167"/>
        <end position="177"/>
    </location>
</feature>
<feature type="helix" evidence="5">
    <location>
        <begin position="181"/>
        <end position="183"/>
    </location>
</feature>
<feature type="strand" evidence="5">
    <location>
        <begin position="184"/>
        <end position="189"/>
    </location>
</feature>
<feature type="turn" evidence="5">
    <location>
        <begin position="191"/>
        <end position="193"/>
    </location>
</feature>
<feature type="helix" evidence="5">
    <location>
        <begin position="194"/>
        <end position="200"/>
    </location>
</feature>
<feature type="strand" evidence="5">
    <location>
        <begin position="204"/>
        <end position="209"/>
    </location>
</feature>
<feature type="strand" evidence="5">
    <location>
        <begin position="224"/>
        <end position="229"/>
    </location>
</feature>
<feature type="helix" evidence="5">
    <location>
        <begin position="230"/>
        <end position="232"/>
    </location>
</feature>
<feature type="helix" evidence="5">
    <location>
        <begin position="233"/>
        <end position="240"/>
    </location>
</feature>
<dbReference type="EC" id="3.1.3.29" evidence="2"/>
<dbReference type="EMBL" id="AK005566">
    <property type="protein sequence ID" value="BAB24126.1"/>
    <property type="molecule type" value="mRNA"/>
</dbReference>
<dbReference type="EMBL" id="AK021344">
    <property type="protein sequence ID" value="BAB32381.1"/>
    <property type="molecule type" value="mRNA"/>
</dbReference>
<dbReference type="EMBL" id="BC018527">
    <property type="protein sequence ID" value="AAH18527.1"/>
    <property type="molecule type" value="mRNA"/>
</dbReference>
<dbReference type="EMBL" id="BC083086">
    <property type="protein sequence ID" value="AAH83086.1"/>
    <property type="molecule type" value="mRNA"/>
</dbReference>
<dbReference type="CCDS" id="CCDS16864.1"/>
<dbReference type="RefSeq" id="NP_080362.1">
    <property type="nucleotide sequence ID" value="NM_026086.2"/>
</dbReference>
<dbReference type="PDB" id="2GFH">
    <property type="method" value="X-ray"/>
    <property type="resolution" value="1.90 A"/>
    <property type="chains" value="A=1-248"/>
</dbReference>
<dbReference type="PDBsum" id="2GFH"/>
<dbReference type="SMR" id="Q9CPT3"/>
<dbReference type="BioGRID" id="212095">
    <property type="interactions" value="1"/>
</dbReference>
<dbReference type="FunCoup" id="Q9CPT3">
    <property type="interactions" value="106"/>
</dbReference>
<dbReference type="STRING" id="10090.ENSMUSP00000063895"/>
<dbReference type="GlyGen" id="Q9CPT3">
    <property type="glycosylation" value="1 site, 1 O-linked glycan (1 site)"/>
</dbReference>
<dbReference type="iPTMnet" id="Q9CPT3"/>
<dbReference type="PhosphoSitePlus" id="Q9CPT3"/>
<dbReference type="PaxDb" id="10090-ENSMUSP00000063895"/>
<dbReference type="PeptideAtlas" id="Q9CPT3"/>
<dbReference type="ProteomicsDB" id="252765"/>
<dbReference type="Pumba" id="Q9CPT3"/>
<dbReference type="Antibodypedia" id="10091">
    <property type="antibodies" value="372 antibodies from 27 providers"/>
</dbReference>
<dbReference type="DNASU" id="67311"/>
<dbReference type="Ensembl" id="ENSMUST00000066640.5">
    <property type="protein sequence ID" value="ENSMUSP00000063895.5"/>
    <property type="gene ID" value="ENSMUSG00000053916.5"/>
</dbReference>
<dbReference type="GeneID" id="67311"/>
<dbReference type="KEGG" id="mmu:67311"/>
<dbReference type="UCSC" id="uc008muv.2">
    <property type="organism name" value="mouse"/>
</dbReference>
<dbReference type="AGR" id="MGI:1914561"/>
<dbReference type="CTD" id="140838"/>
<dbReference type="MGI" id="MGI:1914561">
    <property type="gene designation" value="Nanp"/>
</dbReference>
<dbReference type="VEuPathDB" id="HostDB:ENSMUSG00000053916"/>
<dbReference type="eggNOG" id="KOG3085">
    <property type="taxonomic scope" value="Eukaryota"/>
</dbReference>
<dbReference type="GeneTree" id="ENSGT00390000003094"/>
<dbReference type="HOGENOM" id="CLU_045011_8_2_1"/>
<dbReference type="InParanoid" id="Q9CPT3"/>
<dbReference type="OMA" id="PQETHDT"/>
<dbReference type="OrthoDB" id="1694274at2759"/>
<dbReference type="PhylomeDB" id="Q9CPT3"/>
<dbReference type="TreeFam" id="TF324589"/>
<dbReference type="Reactome" id="R-MMU-4085001">
    <property type="pathway name" value="Sialic acid metabolism"/>
</dbReference>
<dbReference type="UniPathway" id="UPA00630"/>
<dbReference type="BioGRID-ORCS" id="67311">
    <property type="hits" value="1 hit in 40 CRISPR screens"/>
</dbReference>
<dbReference type="ChiTaRS" id="Nanp">
    <property type="organism name" value="mouse"/>
</dbReference>
<dbReference type="EvolutionaryTrace" id="Q9CPT3"/>
<dbReference type="PRO" id="PR:Q9CPT3"/>
<dbReference type="Proteomes" id="UP000000589">
    <property type="component" value="Chromosome 2"/>
</dbReference>
<dbReference type="RNAct" id="Q9CPT3">
    <property type="molecule type" value="protein"/>
</dbReference>
<dbReference type="Bgee" id="ENSMUSG00000053916">
    <property type="expression patterns" value="Expressed in lobe of liver and 65 other cell types or tissues"/>
</dbReference>
<dbReference type="GO" id="GO:0005829">
    <property type="term" value="C:cytosol"/>
    <property type="evidence" value="ECO:0000266"/>
    <property type="project" value="MGI"/>
</dbReference>
<dbReference type="GO" id="GO:0050124">
    <property type="term" value="F:N-acylneuraminate-9-phosphatase activity"/>
    <property type="evidence" value="ECO:0000250"/>
    <property type="project" value="UniProtKB"/>
</dbReference>
<dbReference type="GO" id="GO:0006055">
    <property type="term" value="P:CMP-N-acetylneuraminate biosynthetic process"/>
    <property type="evidence" value="ECO:0000315"/>
    <property type="project" value="MGI"/>
</dbReference>
<dbReference type="GO" id="GO:0070085">
    <property type="term" value="P:glycosylation"/>
    <property type="evidence" value="ECO:0007669"/>
    <property type="project" value="Ensembl"/>
</dbReference>
<dbReference type="GO" id="GO:0006045">
    <property type="term" value="P:N-acetylglucosamine biosynthetic process"/>
    <property type="evidence" value="ECO:0007669"/>
    <property type="project" value="UniProtKB-UniPathway"/>
</dbReference>
<dbReference type="GO" id="GO:0046380">
    <property type="term" value="P:N-acetylneuraminate biosynthetic process"/>
    <property type="evidence" value="ECO:0000250"/>
    <property type="project" value="UniProtKB"/>
</dbReference>
<dbReference type="GO" id="GO:0006054">
    <property type="term" value="P:N-acetylneuraminate metabolic process"/>
    <property type="evidence" value="ECO:0000315"/>
    <property type="project" value="MGI"/>
</dbReference>
<dbReference type="CDD" id="cd04305">
    <property type="entry name" value="HAD_Neu5Ac-Pase_like"/>
    <property type="match status" value="1"/>
</dbReference>
<dbReference type="FunFam" id="1.20.120.710:FF:000001">
    <property type="entry name" value="N-acylneuraminate-9-phosphatase"/>
    <property type="match status" value="1"/>
</dbReference>
<dbReference type="FunFam" id="3.40.50.1000:FF:000116">
    <property type="entry name" value="N-acylneuraminate-9-phosphatase"/>
    <property type="match status" value="1"/>
</dbReference>
<dbReference type="Gene3D" id="3.40.50.1000">
    <property type="entry name" value="HAD superfamily/HAD-like"/>
    <property type="match status" value="1"/>
</dbReference>
<dbReference type="Gene3D" id="1.20.120.710">
    <property type="entry name" value="Haloacid dehalogenase hydrolase-like domain"/>
    <property type="match status" value="1"/>
</dbReference>
<dbReference type="InterPro" id="IPR051400">
    <property type="entry name" value="HAD-like_hydrolase"/>
</dbReference>
<dbReference type="InterPro" id="IPR036412">
    <property type="entry name" value="HAD-like_sf"/>
</dbReference>
<dbReference type="InterPro" id="IPR006439">
    <property type="entry name" value="HAD-SF_hydro_IA"/>
</dbReference>
<dbReference type="InterPro" id="IPR011950">
    <property type="entry name" value="HAD-SF_hydro_IA_CTE7"/>
</dbReference>
<dbReference type="InterPro" id="IPR023214">
    <property type="entry name" value="HAD_sf"/>
</dbReference>
<dbReference type="NCBIfam" id="TIGR02253">
    <property type="entry name" value="CTE7"/>
    <property type="match status" value="1"/>
</dbReference>
<dbReference type="NCBIfam" id="TIGR01549">
    <property type="entry name" value="HAD-SF-IA-v1"/>
    <property type="match status" value="1"/>
</dbReference>
<dbReference type="PANTHER" id="PTHR46470">
    <property type="entry name" value="N-ACYLNEURAMINATE-9-PHOSPHATASE"/>
    <property type="match status" value="1"/>
</dbReference>
<dbReference type="PANTHER" id="PTHR46470:SF3">
    <property type="entry name" value="N-ACYLNEURAMINATE-9-PHOSPHATASE"/>
    <property type="match status" value="1"/>
</dbReference>
<dbReference type="Pfam" id="PF00702">
    <property type="entry name" value="Hydrolase"/>
    <property type="match status" value="1"/>
</dbReference>
<dbReference type="PRINTS" id="PR00413">
    <property type="entry name" value="HADHALOGNASE"/>
</dbReference>
<dbReference type="SFLD" id="SFLDG01135">
    <property type="entry name" value="C1.5.6:_HAD__Beta-PGM__Phospha"/>
    <property type="match status" value="1"/>
</dbReference>
<dbReference type="SFLD" id="SFLDS00003">
    <property type="entry name" value="Haloacid_Dehalogenase"/>
    <property type="match status" value="1"/>
</dbReference>
<dbReference type="SUPFAM" id="SSF56784">
    <property type="entry name" value="HAD-like"/>
    <property type="match status" value="1"/>
</dbReference>
<comment type="function">
    <text evidence="2">Catalyzes the dephosphorylation of N-acylneuraminate 9-phosphate (Neu5Ac-9-P) to sialic acid N-acetylneuraminic acid (Neu5Ac). May also use N-glycoloylneuraminate 9-phosphate as substrate.</text>
</comment>
<comment type="catalytic activity">
    <reaction evidence="2">
        <text>N-acetylneuraminate 9-phosphate + H2O = N-acetylneuraminate + phosphate</text>
        <dbReference type="Rhea" id="RHEA:80839"/>
        <dbReference type="ChEBI" id="CHEBI:15377"/>
        <dbReference type="ChEBI" id="CHEBI:35418"/>
        <dbReference type="ChEBI" id="CHEBI:43474"/>
        <dbReference type="ChEBI" id="CHEBI:231734"/>
        <dbReference type="EC" id="3.1.3.29"/>
    </reaction>
    <physiologicalReaction direction="left-to-right" evidence="2">
        <dbReference type="Rhea" id="RHEA:80840"/>
    </physiologicalReaction>
</comment>
<comment type="catalytic activity">
    <reaction evidence="2">
        <text>N-glycoloylneuraminate 9-phosphate + H2O = N-glycoloylneuraminate + phosphate</text>
        <dbReference type="Rhea" id="RHEA:83303"/>
        <dbReference type="ChEBI" id="CHEBI:15377"/>
        <dbReference type="ChEBI" id="CHEBI:29025"/>
        <dbReference type="ChEBI" id="CHEBI:43474"/>
        <dbReference type="ChEBI" id="CHEBI:232623"/>
    </reaction>
    <physiologicalReaction direction="left-to-right" evidence="2">
        <dbReference type="Rhea" id="RHEA:83304"/>
    </physiologicalReaction>
</comment>
<comment type="cofactor">
    <cofactor evidence="1">
        <name>Mg(2+)</name>
        <dbReference type="ChEBI" id="CHEBI:18420"/>
    </cofactor>
</comment>
<comment type="activity regulation">
    <text evidence="2">Inhibited by calcium. Inhibited by vanadate, sodium orthovanate and phosphonate.</text>
</comment>
<comment type="pathway">
    <text>Amino-sugar metabolism; N-acetylneuraminate biosynthesis.</text>
</comment>
<comment type="similarity">
    <text evidence="3">Belongs to the HAD-like hydrolase superfamily. NANP family.</text>
</comment>
<protein>
    <recommendedName>
        <fullName>N-acylneuraminate-9-phosphatase</fullName>
        <ecNumber evidence="2">3.1.3.29</ecNumber>
    </recommendedName>
    <alternativeName>
        <fullName evidence="2">Haloacid dehalogenase-like hydrolase domain-containing protein 4</fullName>
    </alternativeName>
    <alternativeName>
        <fullName evidence="2">N-acetylneuraminate-9-phosphate phosphatase</fullName>
    </alternativeName>
    <alternativeName>
        <fullName>Neu5Ac-9-Pase</fullName>
    </alternativeName>
</protein>
<keyword id="KW-0002">3D-structure</keyword>
<keyword id="KW-0119">Carbohydrate metabolism</keyword>
<keyword id="KW-0378">Hydrolase</keyword>
<keyword id="KW-0460">Magnesium</keyword>
<keyword id="KW-0479">Metal-binding</keyword>
<keyword id="KW-1185">Reference proteome</keyword>
<evidence type="ECO:0000250" key="1"/>
<evidence type="ECO:0000250" key="2">
    <source>
        <dbReference type="UniProtKB" id="Q8TBE9"/>
    </source>
</evidence>
<evidence type="ECO:0000305" key="3"/>
<evidence type="ECO:0000312" key="4">
    <source>
        <dbReference type="MGI" id="MGI:1914561"/>
    </source>
</evidence>
<evidence type="ECO:0007829" key="5">
    <source>
        <dbReference type="PDB" id="2GFH"/>
    </source>
</evidence>
<reference key="1">
    <citation type="journal article" date="2005" name="Science">
        <title>The transcriptional landscape of the mammalian genome.</title>
        <authorList>
            <person name="Carninci P."/>
            <person name="Kasukawa T."/>
            <person name="Katayama S."/>
            <person name="Gough J."/>
            <person name="Frith M.C."/>
            <person name="Maeda N."/>
            <person name="Oyama R."/>
            <person name="Ravasi T."/>
            <person name="Lenhard B."/>
            <person name="Wells C."/>
            <person name="Kodzius R."/>
            <person name="Shimokawa K."/>
            <person name="Bajic V.B."/>
            <person name="Brenner S.E."/>
            <person name="Batalov S."/>
            <person name="Forrest A.R."/>
            <person name="Zavolan M."/>
            <person name="Davis M.J."/>
            <person name="Wilming L.G."/>
            <person name="Aidinis V."/>
            <person name="Allen J.E."/>
            <person name="Ambesi-Impiombato A."/>
            <person name="Apweiler R."/>
            <person name="Aturaliya R.N."/>
            <person name="Bailey T.L."/>
            <person name="Bansal M."/>
            <person name="Baxter L."/>
            <person name="Beisel K.W."/>
            <person name="Bersano T."/>
            <person name="Bono H."/>
            <person name="Chalk A.M."/>
            <person name="Chiu K.P."/>
            <person name="Choudhary V."/>
            <person name="Christoffels A."/>
            <person name="Clutterbuck D.R."/>
            <person name="Crowe M.L."/>
            <person name="Dalla E."/>
            <person name="Dalrymple B.P."/>
            <person name="de Bono B."/>
            <person name="Della Gatta G."/>
            <person name="di Bernardo D."/>
            <person name="Down T."/>
            <person name="Engstrom P."/>
            <person name="Fagiolini M."/>
            <person name="Faulkner G."/>
            <person name="Fletcher C.F."/>
            <person name="Fukushima T."/>
            <person name="Furuno M."/>
            <person name="Futaki S."/>
            <person name="Gariboldi M."/>
            <person name="Georgii-Hemming P."/>
            <person name="Gingeras T.R."/>
            <person name="Gojobori T."/>
            <person name="Green R.E."/>
            <person name="Gustincich S."/>
            <person name="Harbers M."/>
            <person name="Hayashi Y."/>
            <person name="Hensch T.K."/>
            <person name="Hirokawa N."/>
            <person name="Hill D."/>
            <person name="Huminiecki L."/>
            <person name="Iacono M."/>
            <person name="Ikeo K."/>
            <person name="Iwama A."/>
            <person name="Ishikawa T."/>
            <person name="Jakt M."/>
            <person name="Kanapin A."/>
            <person name="Katoh M."/>
            <person name="Kawasawa Y."/>
            <person name="Kelso J."/>
            <person name="Kitamura H."/>
            <person name="Kitano H."/>
            <person name="Kollias G."/>
            <person name="Krishnan S.P."/>
            <person name="Kruger A."/>
            <person name="Kummerfeld S.K."/>
            <person name="Kurochkin I.V."/>
            <person name="Lareau L.F."/>
            <person name="Lazarevic D."/>
            <person name="Lipovich L."/>
            <person name="Liu J."/>
            <person name="Liuni S."/>
            <person name="McWilliam S."/>
            <person name="Madan Babu M."/>
            <person name="Madera M."/>
            <person name="Marchionni L."/>
            <person name="Matsuda H."/>
            <person name="Matsuzawa S."/>
            <person name="Miki H."/>
            <person name="Mignone F."/>
            <person name="Miyake S."/>
            <person name="Morris K."/>
            <person name="Mottagui-Tabar S."/>
            <person name="Mulder N."/>
            <person name="Nakano N."/>
            <person name="Nakauchi H."/>
            <person name="Ng P."/>
            <person name="Nilsson R."/>
            <person name="Nishiguchi S."/>
            <person name="Nishikawa S."/>
            <person name="Nori F."/>
            <person name="Ohara O."/>
            <person name="Okazaki Y."/>
            <person name="Orlando V."/>
            <person name="Pang K.C."/>
            <person name="Pavan W.J."/>
            <person name="Pavesi G."/>
            <person name="Pesole G."/>
            <person name="Petrovsky N."/>
            <person name="Piazza S."/>
            <person name="Reed J."/>
            <person name="Reid J.F."/>
            <person name="Ring B.Z."/>
            <person name="Ringwald M."/>
            <person name="Rost B."/>
            <person name="Ruan Y."/>
            <person name="Salzberg S.L."/>
            <person name="Sandelin A."/>
            <person name="Schneider C."/>
            <person name="Schoenbach C."/>
            <person name="Sekiguchi K."/>
            <person name="Semple C.A."/>
            <person name="Seno S."/>
            <person name="Sessa L."/>
            <person name="Sheng Y."/>
            <person name="Shibata Y."/>
            <person name="Shimada H."/>
            <person name="Shimada K."/>
            <person name="Silva D."/>
            <person name="Sinclair B."/>
            <person name="Sperling S."/>
            <person name="Stupka E."/>
            <person name="Sugiura K."/>
            <person name="Sultana R."/>
            <person name="Takenaka Y."/>
            <person name="Taki K."/>
            <person name="Tammoja K."/>
            <person name="Tan S.L."/>
            <person name="Tang S."/>
            <person name="Taylor M.S."/>
            <person name="Tegner J."/>
            <person name="Teichmann S.A."/>
            <person name="Ueda H.R."/>
            <person name="van Nimwegen E."/>
            <person name="Verardo R."/>
            <person name="Wei C.L."/>
            <person name="Yagi K."/>
            <person name="Yamanishi H."/>
            <person name="Zabarovsky E."/>
            <person name="Zhu S."/>
            <person name="Zimmer A."/>
            <person name="Hide W."/>
            <person name="Bult C."/>
            <person name="Grimmond S.M."/>
            <person name="Teasdale R.D."/>
            <person name="Liu E.T."/>
            <person name="Brusic V."/>
            <person name="Quackenbush J."/>
            <person name="Wahlestedt C."/>
            <person name="Mattick J.S."/>
            <person name="Hume D.A."/>
            <person name="Kai C."/>
            <person name="Sasaki D."/>
            <person name="Tomaru Y."/>
            <person name="Fukuda S."/>
            <person name="Kanamori-Katayama M."/>
            <person name="Suzuki M."/>
            <person name="Aoki J."/>
            <person name="Arakawa T."/>
            <person name="Iida J."/>
            <person name="Imamura K."/>
            <person name="Itoh M."/>
            <person name="Kato T."/>
            <person name="Kawaji H."/>
            <person name="Kawagashira N."/>
            <person name="Kawashima T."/>
            <person name="Kojima M."/>
            <person name="Kondo S."/>
            <person name="Konno H."/>
            <person name="Nakano K."/>
            <person name="Ninomiya N."/>
            <person name="Nishio T."/>
            <person name="Okada M."/>
            <person name="Plessy C."/>
            <person name="Shibata K."/>
            <person name="Shiraki T."/>
            <person name="Suzuki S."/>
            <person name="Tagami M."/>
            <person name="Waki K."/>
            <person name="Watahiki A."/>
            <person name="Okamura-Oho Y."/>
            <person name="Suzuki H."/>
            <person name="Kawai J."/>
            <person name="Hayashizaki Y."/>
        </authorList>
    </citation>
    <scope>NUCLEOTIDE SEQUENCE [LARGE SCALE MRNA]</scope>
    <source>
        <strain>C57BL/6J</strain>
        <tissue>Mammary gland</tissue>
        <tissue>Placenta</tissue>
    </source>
</reference>
<reference key="2">
    <citation type="journal article" date="2004" name="Genome Res.">
        <title>The status, quality, and expansion of the NIH full-length cDNA project: the Mammalian Gene Collection (MGC).</title>
        <authorList>
            <consortium name="The MGC Project Team"/>
        </authorList>
    </citation>
    <scope>NUCLEOTIDE SEQUENCE [LARGE SCALE MRNA]</scope>
    <source>
        <strain>FVB/N</strain>
        <tissue>Limb</tissue>
        <tissue>Mammary gland</tissue>
    </source>
</reference>
<reference key="3">
    <citation type="journal article" date="2010" name="Cell">
        <title>A tissue-specific atlas of mouse protein phosphorylation and expression.</title>
        <authorList>
            <person name="Huttlin E.L."/>
            <person name="Jedrychowski M.P."/>
            <person name="Elias J.E."/>
            <person name="Goswami T."/>
            <person name="Rad R."/>
            <person name="Beausoleil S.A."/>
            <person name="Villen J."/>
            <person name="Haas W."/>
            <person name="Sowa M.E."/>
            <person name="Gygi S.P."/>
        </authorList>
    </citation>
    <scope>IDENTIFICATION BY MASS SPECTROMETRY [LARGE SCALE ANALYSIS]</scope>
    <source>
        <tissue>Brain</tissue>
        <tissue>Kidney</tissue>
        <tissue>Spleen</tissue>
    </source>
</reference>
<reference key="4">
    <citation type="submission" date="2011-03" db="PDB data bank">
        <title>Crystal structure of protein C20orf147 homolog (17391249) from Mus musculus at 1.90 A resolution.</title>
        <authorList>
            <consortium name="Joint center for structural genomics (JCSG)"/>
        </authorList>
    </citation>
    <scope>X-RAY CRYSTALLOGRAPHY (1.9 ANGSTROMS) IN COMPLEX WITH PHOSPHATE IONS</scope>
</reference>
<gene>
    <name evidence="4" type="primary">Nanp</name>
    <name type="synonym">Hdhd4</name>
</gene>